<evidence type="ECO:0000250" key="1"/>
<evidence type="ECO:0000255" key="2"/>
<evidence type="ECO:0000255" key="3">
    <source>
        <dbReference type="PROSITE-ProRule" id="PRU01210"/>
    </source>
</evidence>
<evidence type="ECO:0000303" key="4">
    <source>
    </source>
</evidence>
<evidence type="ECO:0000305" key="5"/>
<evidence type="ECO:0000305" key="6">
    <source>
    </source>
</evidence>
<evidence type="ECO:0000312" key="7">
    <source>
        <dbReference type="EMBL" id="CAH03782.1"/>
    </source>
</evidence>
<protein>
    <recommendedName>
        <fullName evidence="4">Toxin-like peptide AaF1CA1</fullName>
    </recommendedName>
</protein>
<dbReference type="EMBL" id="AJ781829">
    <property type="protein sequence ID" value="CAH03782.1"/>
    <property type="molecule type" value="mRNA"/>
</dbReference>
<dbReference type="SMR" id="Q4LCT3"/>
<dbReference type="GO" id="GO:0005576">
    <property type="term" value="C:extracellular region"/>
    <property type="evidence" value="ECO:0000250"/>
    <property type="project" value="UniProtKB"/>
</dbReference>
<dbReference type="GO" id="GO:0008200">
    <property type="term" value="F:ion channel inhibitor activity"/>
    <property type="evidence" value="ECO:0000250"/>
    <property type="project" value="UniProtKB"/>
</dbReference>
<dbReference type="GO" id="GO:0019871">
    <property type="term" value="F:sodium channel inhibitor activity"/>
    <property type="evidence" value="ECO:0007669"/>
    <property type="project" value="InterPro"/>
</dbReference>
<dbReference type="GO" id="GO:0090729">
    <property type="term" value="F:toxin activity"/>
    <property type="evidence" value="ECO:0007669"/>
    <property type="project" value="UniProtKB-KW"/>
</dbReference>
<dbReference type="CDD" id="cd23106">
    <property type="entry name" value="neurotoxins_LC_scorpion"/>
    <property type="match status" value="1"/>
</dbReference>
<dbReference type="FunFam" id="3.30.30.10:FF:000008">
    <property type="entry name" value="Toxin-like peptide AaF1CA7"/>
    <property type="match status" value="1"/>
</dbReference>
<dbReference type="Gene3D" id="3.30.30.10">
    <property type="entry name" value="Knottin, scorpion toxin-like"/>
    <property type="match status" value="1"/>
</dbReference>
<dbReference type="InterPro" id="IPR044062">
    <property type="entry name" value="LCN-type_CS_alpha_beta_dom"/>
</dbReference>
<dbReference type="InterPro" id="IPR036574">
    <property type="entry name" value="Scorpion_toxin-like_sf"/>
</dbReference>
<dbReference type="InterPro" id="IPR002061">
    <property type="entry name" value="Scorpion_toxinL/defensin"/>
</dbReference>
<dbReference type="Pfam" id="PF00537">
    <property type="entry name" value="Toxin_3"/>
    <property type="match status" value="1"/>
</dbReference>
<dbReference type="SUPFAM" id="SSF57095">
    <property type="entry name" value="Scorpion toxin-like"/>
    <property type="match status" value="1"/>
</dbReference>
<dbReference type="PROSITE" id="PS51863">
    <property type="entry name" value="LCN_CSAB"/>
    <property type="match status" value="1"/>
</dbReference>
<comment type="function">
    <text evidence="1">Probable ion channel inhibitor.</text>
</comment>
<comment type="subcellular location">
    <subcellularLocation>
        <location evidence="6">Secreted</location>
    </subcellularLocation>
</comment>
<comment type="tissue specificity">
    <text evidence="6">Expressed by the venom gland.</text>
</comment>
<comment type="domain">
    <text evidence="5">Has the structural arrangement of an alpha-helix connected to antiparallel beta-sheets by disulfide bonds (CS-alpha/beta).</text>
</comment>
<comment type="similarity">
    <text evidence="5">Belongs to the long (3 C-C) scorpion toxin superfamily.</text>
</comment>
<proteinExistence type="inferred from homology"/>
<keyword id="KW-1015">Disulfide bond</keyword>
<keyword id="KW-0872">Ion channel impairing toxin</keyword>
<keyword id="KW-0528">Neurotoxin</keyword>
<keyword id="KW-0964">Secreted</keyword>
<keyword id="KW-0732">Signal</keyword>
<keyword id="KW-0800">Toxin</keyword>
<reference evidence="7" key="1">
    <citation type="journal article" date="2005" name="Biochem. Biophys. Res. Commun.">
        <title>New 'birtoxin analogs' from Androctonus australis venom.</title>
        <authorList>
            <person name="Martin-Eauclaire M.-F."/>
            <person name="Ceard B."/>
            <person name="Bosmans F."/>
            <person name="Rosso J.-P."/>
            <person name="Tytgat J."/>
            <person name="Bougis P.E."/>
        </authorList>
    </citation>
    <scope>NUCLEOTIDE SEQUENCE [MRNA]</scope>
    <source>
        <tissue>Venom gland</tissue>
    </source>
</reference>
<sequence length="80" mass="9351">MMKLVLFSVIVILFSLIGSIHGADVPGNYPLRPFRYRYGCAVPGDSDYCVRVCRKHGVRYGYCWFFTCWCEYLEDKNIKI</sequence>
<accession>Q4LCT3</accession>
<organism>
    <name type="scientific">Androctonus australis</name>
    <name type="common">Sahara scorpion</name>
    <dbReference type="NCBI Taxonomy" id="6858"/>
    <lineage>
        <taxon>Eukaryota</taxon>
        <taxon>Metazoa</taxon>
        <taxon>Ecdysozoa</taxon>
        <taxon>Arthropoda</taxon>
        <taxon>Chelicerata</taxon>
        <taxon>Arachnida</taxon>
        <taxon>Scorpiones</taxon>
        <taxon>Buthida</taxon>
        <taxon>Buthoidea</taxon>
        <taxon>Buthidae</taxon>
        <taxon>Androctonus</taxon>
    </lineage>
</organism>
<feature type="signal peptide" evidence="2">
    <location>
        <begin position="1"/>
        <end position="22"/>
    </location>
</feature>
<feature type="chain" id="PRO_0000228816" description="Toxin-like peptide AaF1CA1">
    <location>
        <begin position="23"/>
        <end position="80"/>
    </location>
</feature>
<feature type="domain" description="LCN-type CS-alpha/beta" evidence="3">
    <location>
        <begin position="25"/>
        <end position="80"/>
    </location>
</feature>
<feature type="disulfide bond" evidence="3">
    <location>
        <begin position="40"/>
        <end position="63"/>
    </location>
</feature>
<feature type="disulfide bond" evidence="3">
    <location>
        <begin position="49"/>
        <end position="68"/>
    </location>
</feature>
<feature type="disulfide bond" evidence="3">
    <location>
        <begin position="53"/>
        <end position="70"/>
    </location>
</feature>
<name>TXA1_ANDAU</name>